<evidence type="ECO:0000255" key="1">
    <source>
        <dbReference type="HAMAP-Rule" id="MF_00274"/>
    </source>
</evidence>
<keyword id="KW-0963">Cytoplasm</keyword>
<keyword id="KW-0238">DNA-binding</keyword>
<gene>
    <name type="ordered locus">lpp2803</name>
</gene>
<accession>Q5X1E0</accession>
<comment type="function">
    <text evidence="1">Binds to DNA and alters its conformation. May be involved in regulation of gene expression, nucleoid organization and DNA protection.</text>
</comment>
<comment type="subunit">
    <text evidence="1">Homodimer.</text>
</comment>
<comment type="subcellular location">
    <subcellularLocation>
        <location evidence="1">Cytoplasm</location>
        <location evidence="1">Nucleoid</location>
    </subcellularLocation>
</comment>
<comment type="similarity">
    <text evidence="1">Belongs to the YbaB/EbfC family.</text>
</comment>
<dbReference type="EMBL" id="CR628336">
    <property type="protein sequence ID" value="CAH13956.1"/>
    <property type="molecule type" value="Genomic_DNA"/>
</dbReference>
<dbReference type="RefSeq" id="WP_011216606.1">
    <property type="nucleotide sequence ID" value="NC_006368.1"/>
</dbReference>
<dbReference type="SMR" id="Q5X1E0"/>
<dbReference type="KEGG" id="lpp:lpp2803"/>
<dbReference type="LegioList" id="lpp2803"/>
<dbReference type="HOGENOM" id="CLU_140930_0_0_6"/>
<dbReference type="GO" id="GO:0043590">
    <property type="term" value="C:bacterial nucleoid"/>
    <property type="evidence" value="ECO:0007669"/>
    <property type="project" value="UniProtKB-UniRule"/>
</dbReference>
<dbReference type="GO" id="GO:0005829">
    <property type="term" value="C:cytosol"/>
    <property type="evidence" value="ECO:0007669"/>
    <property type="project" value="TreeGrafter"/>
</dbReference>
<dbReference type="GO" id="GO:0003677">
    <property type="term" value="F:DNA binding"/>
    <property type="evidence" value="ECO:0007669"/>
    <property type="project" value="UniProtKB-UniRule"/>
</dbReference>
<dbReference type="Gene3D" id="3.30.1310.10">
    <property type="entry name" value="Nucleoid-associated protein YbaB-like domain"/>
    <property type="match status" value="1"/>
</dbReference>
<dbReference type="HAMAP" id="MF_00274">
    <property type="entry name" value="DNA_YbaB_EbfC"/>
    <property type="match status" value="1"/>
</dbReference>
<dbReference type="InterPro" id="IPR036894">
    <property type="entry name" value="YbaB-like_sf"/>
</dbReference>
<dbReference type="InterPro" id="IPR004401">
    <property type="entry name" value="YbaB/EbfC"/>
</dbReference>
<dbReference type="NCBIfam" id="TIGR00103">
    <property type="entry name" value="DNA_YbaB_EbfC"/>
    <property type="match status" value="1"/>
</dbReference>
<dbReference type="PANTHER" id="PTHR33449">
    <property type="entry name" value="NUCLEOID-ASSOCIATED PROTEIN YBAB"/>
    <property type="match status" value="1"/>
</dbReference>
<dbReference type="PANTHER" id="PTHR33449:SF1">
    <property type="entry name" value="NUCLEOID-ASSOCIATED PROTEIN YBAB"/>
    <property type="match status" value="1"/>
</dbReference>
<dbReference type="Pfam" id="PF02575">
    <property type="entry name" value="YbaB_DNA_bd"/>
    <property type="match status" value="1"/>
</dbReference>
<dbReference type="PIRSF" id="PIRSF004555">
    <property type="entry name" value="UCP004555"/>
    <property type="match status" value="1"/>
</dbReference>
<dbReference type="SUPFAM" id="SSF82607">
    <property type="entry name" value="YbaB-like"/>
    <property type="match status" value="1"/>
</dbReference>
<name>Y2803_LEGPA</name>
<feature type="chain" id="PRO_1000003760" description="Nucleoid-associated protein lpp2803">
    <location>
        <begin position="1"/>
        <end position="112"/>
    </location>
</feature>
<protein>
    <recommendedName>
        <fullName evidence="1">Nucleoid-associated protein lpp2803</fullName>
    </recommendedName>
</protein>
<proteinExistence type="inferred from homology"/>
<sequence>MDINQNLGNLMKEAQKMQQRMQEAQQQLSQLVVSGESGGGMVTIKMNGRHDVTEVKIKPTLMDEDIEMLEDLIAAAVNDAVRKIEKASKEKISQLTAGLNIPTDLMGGKEGE</sequence>
<organism>
    <name type="scientific">Legionella pneumophila (strain Paris)</name>
    <dbReference type="NCBI Taxonomy" id="297246"/>
    <lineage>
        <taxon>Bacteria</taxon>
        <taxon>Pseudomonadati</taxon>
        <taxon>Pseudomonadota</taxon>
        <taxon>Gammaproteobacteria</taxon>
        <taxon>Legionellales</taxon>
        <taxon>Legionellaceae</taxon>
        <taxon>Legionella</taxon>
    </lineage>
</organism>
<reference key="1">
    <citation type="journal article" date="2004" name="Nat. Genet.">
        <title>Evidence in the Legionella pneumophila genome for exploitation of host cell functions and high genome plasticity.</title>
        <authorList>
            <person name="Cazalet C."/>
            <person name="Rusniok C."/>
            <person name="Brueggemann H."/>
            <person name="Zidane N."/>
            <person name="Magnier A."/>
            <person name="Ma L."/>
            <person name="Tichit M."/>
            <person name="Jarraud S."/>
            <person name="Bouchier C."/>
            <person name="Vandenesch F."/>
            <person name="Kunst F."/>
            <person name="Etienne J."/>
            <person name="Glaser P."/>
            <person name="Buchrieser C."/>
        </authorList>
    </citation>
    <scope>NUCLEOTIDE SEQUENCE [LARGE SCALE GENOMIC DNA]</scope>
    <source>
        <strain>Paris</strain>
    </source>
</reference>